<evidence type="ECO:0000255" key="1">
    <source>
        <dbReference type="HAMAP-Rule" id="MF_01367"/>
    </source>
</evidence>
<evidence type="ECO:0000305" key="2"/>
<sequence>MIQEQTMLNVADNSGARRVMCIKVLGGSHRRYAGVGDIIKITIKEAIPRGKVKKGDVLKAVVVRTKKGVRRPDGSVIRFDGNACVLLNNNSEQPIGTRIFGPVTRELRSEKFMKIISLAPEVL</sequence>
<comment type="function">
    <text evidence="1">Binds to 23S rRNA. Forms part of two intersubunit bridges in the 70S ribosome.</text>
</comment>
<comment type="subunit">
    <text evidence="1">Part of the 50S ribosomal subunit. Forms a cluster with proteins L3 and L19. In the 70S ribosome, L14 and L19 interact and together make contacts with the 16S rRNA in bridges B5 and B8.</text>
</comment>
<comment type="similarity">
    <text evidence="1">Belongs to the universal ribosomal protein uL14 family.</text>
</comment>
<proteinExistence type="inferred from homology"/>
<accession>P0ADY4</accession>
<accession>P02411</accession>
<reference key="1">
    <citation type="journal article" date="2002" name="Proc. Natl. Acad. Sci. U.S.A.">
        <title>Extensive mosaic structure revealed by the complete genome sequence of uropathogenic Escherichia coli.</title>
        <authorList>
            <person name="Welch R.A."/>
            <person name="Burland V."/>
            <person name="Plunkett G. III"/>
            <person name="Redford P."/>
            <person name="Roesch P."/>
            <person name="Rasko D."/>
            <person name="Buckles E.L."/>
            <person name="Liou S.-R."/>
            <person name="Boutin A."/>
            <person name="Hackett J."/>
            <person name="Stroud D."/>
            <person name="Mayhew G.F."/>
            <person name="Rose D.J."/>
            <person name="Zhou S."/>
            <person name="Schwartz D.C."/>
            <person name="Perna N.T."/>
            <person name="Mobley H.L.T."/>
            <person name="Donnenberg M.S."/>
            <person name="Blattner F.R."/>
        </authorList>
    </citation>
    <scope>NUCLEOTIDE SEQUENCE [LARGE SCALE GENOMIC DNA]</scope>
    <source>
        <strain>CFT073 / ATCC 700928 / UPEC</strain>
    </source>
</reference>
<name>RL14_ECOL6</name>
<dbReference type="EMBL" id="AE014075">
    <property type="protein sequence ID" value="AAN82513.1"/>
    <property type="molecule type" value="Genomic_DNA"/>
</dbReference>
<dbReference type="RefSeq" id="WP_000613955.1">
    <property type="nucleotide sequence ID" value="NZ_CP051263.1"/>
</dbReference>
<dbReference type="SMR" id="P0ADY4"/>
<dbReference type="STRING" id="199310.c4075"/>
<dbReference type="GeneID" id="93778677"/>
<dbReference type="KEGG" id="ecc:c4075"/>
<dbReference type="eggNOG" id="COG0093">
    <property type="taxonomic scope" value="Bacteria"/>
</dbReference>
<dbReference type="HOGENOM" id="CLU_095071_2_1_6"/>
<dbReference type="BioCyc" id="ECOL199310:C4075-MONOMER"/>
<dbReference type="Proteomes" id="UP000001410">
    <property type="component" value="Chromosome"/>
</dbReference>
<dbReference type="GO" id="GO:0022625">
    <property type="term" value="C:cytosolic large ribosomal subunit"/>
    <property type="evidence" value="ECO:0007669"/>
    <property type="project" value="TreeGrafter"/>
</dbReference>
<dbReference type="GO" id="GO:0070180">
    <property type="term" value="F:large ribosomal subunit rRNA binding"/>
    <property type="evidence" value="ECO:0007669"/>
    <property type="project" value="TreeGrafter"/>
</dbReference>
<dbReference type="GO" id="GO:0003735">
    <property type="term" value="F:structural constituent of ribosome"/>
    <property type="evidence" value="ECO:0007669"/>
    <property type="project" value="InterPro"/>
</dbReference>
<dbReference type="GO" id="GO:0006412">
    <property type="term" value="P:translation"/>
    <property type="evidence" value="ECO:0007669"/>
    <property type="project" value="UniProtKB-UniRule"/>
</dbReference>
<dbReference type="CDD" id="cd00337">
    <property type="entry name" value="Ribosomal_uL14"/>
    <property type="match status" value="1"/>
</dbReference>
<dbReference type="FunFam" id="2.40.150.20:FF:000001">
    <property type="entry name" value="50S ribosomal protein L14"/>
    <property type="match status" value="1"/>
</dbReference>
<dbReference type="Gene3D" id="2.40.150.20">
    <property type="entry name" value="Ribosomal protein L14"/>
    <property type="match status" value="1"/>
</dbReference>
<dbReference type="HAMAP" id="MF_01367">
    <property type="entry name" value="Ribosomal_uL14"/>
    <property type="match status" value="1"/>
</dbReference>
<dbReference type="InterPro" id="IPR000218">
    <property type="entry name" value="Ribosomal_uL14"/>
</dbReference>
<dbReference type="InterPro" id="IPR005745">
    <property type="entry name" value="Ribosomal_uL14_bac-type"/>
</dbReference>
<dbReference type="InterPro" id="IPR019972">
    <property type="entry name" value="Ribosomal_uL14_CS"/>
</dbReference>
<dbReference type="InterPro" id="IPR036853">
    <property type="entry name" value="Ribosomal_uL14_sf"/>
</dbReference>
<dbReference type="NCBIfam" id="TIGR01067">
    <property type="entry name" value="rplN_bact"/>
    <property type="match status" value="1"/>
</dbReference>
<dbReference type="PANTHER" id="PTHR11761">
    <property type="entry name" value="50S/60S RIBOSOMAL PROTEIN L14/L23"/>
    <property type="match status" value="1"/>
</dbReference>
<dbReference type="PANTHER" id="PTHR11761:SF3">
    <property type="entry name" value="LARGE RIBOSOMAL SUBUNIT PROTEIN UL14M"/>
    <property type="match status" value="1"/>
</dbReference>
<dbReference type="Pfam" id="PF00238">
    <property type="entry name" value="Ribosomal_L14"/>
    <property type="match status" value="1"/>
</dbReference>
<dbReference type="SMART" id="SM01374">
    <property type="entry name" value="Ribosomal_L14"/>
    <property type="match status" value="1"/>
</dbReference>
<dbReference type="SUPFAM" id="SSF50193">
    <property type="entry name" value="Ribosomal protein L14"/>
    <property type="match status" value="1"/>
</dbReference>
<dbReference type="PROSITE" id="PS00049">
    <property type="entry name" value="RIBOSOMAL_L14"/>
    <property type="match status" value="1"/>
</dbReference>
<feature type="chain" id="PRO_0000128542" description="Large ribosomal subunit protein uL14">
    <location>
        <begin position="1"/>
        <end position="123"/>
    </location>
</feature>
<gene>
    <name evidence="1" type="primary">rplN</name>
    <name type="ordered locus">c4075</name>
</gene>
<organism>
    <name type="scientific">Escherichia coli O6:H1 (strain CFT073 / ATCC 700928 / UPEC)</name>
    <dbReference type="NCBI Taxonomy" id="199310"/>
    <lineage>
        <taxon>Bacteria</taxon>
        <taxon>Pseudomonadati</taxon>
        <taxon>Pseudomonadota</taxon>
        <taxon>Gammaproteobacteria</taxon>
        <taxon>Enterobacterales</taxon>
        <taxon>Enterobacteriaceae</taxon>
        <taxon>Escherichia</taxon>
    </lineage>
</organism>
<protein>
    <recommendedName>
        <fullName evidence="1">Large ribosomal subunit protein uL14</fullName>
    </recommendedName>
    <alternativeName>
        <fullName evidence="2">50S ribosomal protein L14</fullName>
    </alternativeName>
</protein>
<keyword id="KW-1185">Reference proteome</keyword>
<keyword id="KW-0687">Ribonucleoprotein</keyword>
<keyword id="KW-0689">Ribosomal protein</keyword>
<keyword id="KW-0694">RNA-binding</keyword>
<keyword id="KW-0699">rRNA-binding</keyword>